<organism>
    <name type="scientific">Homo sapiens</name>
    <name type="common">Human</name>
    <dbReference type="NCBI Taxonomy" id="9606"/>
    <lineage>
        <taxon>Eukaryota</taxon>
        <taxon>Metazoa</taxon>
        <taxon>Chordata</taxon>
        <taxon>Craniata</taxon>
        <taxon>Vertebrata</taxon>
        <taxon>Euteleostomi</taxon>
        <taxon>Mammalia</taxon>
        <taxon>Eutheria</taxon>
        <taxon>Euarchontoglires</taxon>
        <taxon>Primates</taxon>
        <taxon>Haplorrhini</taxon>
        <taxon>Catarrhini</taxon>
        <taxon>Hominidae</taxon>
        <taxon>Homo</taxon>
    </lineage>
</organism>
<evidence type="ECO:0000255" key="1"/>
<evidence type="ECO:0000255" key="2">
    <source>
        <dbReference type="PROSITE-ProRule" id="PRU00114"/>
    </source>
</evidence>
<evidence type="ECO:0000256" key="3">
    <source>
        <dbReference type="SAM" id="MobiDB-lite"/>
    </source>
</evidence>
<evidence type="ECO:0000303" key="4">
    <source>
    </source>
</evidence>
<evidence type="ECO:0000303" key="5">
    <source>
    </source>
</evidence>
<evidence type="ECO:0000303" key="6">
    <source>
    </source>
</evidence>
<evidence type="ECO:0000303" key="7">
    <source>
    </source>
</evidence>
<evidence type="ECO:0000303" key="8">
    <source>
    </source>
</evidence>
<evidence type="ECO:0000303" key="9">
    <source ref="2"/>
</evidence>
<evidence type="ECO:0000305" key="10"/>
<protein>
    <recommendedName>
        <fullName evidence="9">T cell receptor beta variable 7-4</fullName>
    </recommendedName>
</protein>
<comment type="function">
    <text evidence="4 6 7 8">V region of the variable domain of T cell receptor (TR) beta chain that participates in the antigen recognition (PubMed:24600447). Alpha-beta T cell receptors are antigen specific receptors which are essential to the immune response and are present on the cell surface of T lymphocytes. Recognize peptide-major histocompatibility (MH) (pMH) complexes that are displayed by antigen presenting cells (APC), a prerequisite for efficient T cell adaptive immunity against pathogens (PubMed:25493333). Binding of alpha-beta TR to pMH complex initiates TR-CD3 clustering on the cell surface and intracellular activation of LCK that phosphorylates the ITAM motifs of CD3G, CD3D, CD3E and CD247 enabling the recruitment of ZAP70. In turn ZAP70 phosphorylates LAT, which recruits numerous signaling molecules to form the LAT signalosome. The LAT signalosome propagates signal branching to three major signaling pathways, the calcium, the mitogen-activated protein kinase (MAPK) kinase and the nuclear factor NF-kappa-B (NF-kB) pathways, leading to the mobilization of transcription factors that are critical for gene expression and essential for T cell growth and differentiation (PubMed:23524462). The T cell repertoire is generated in the thymus, by V-(D)-J rearrangement. This repertoire is then shaped by intrathymic selection events to generate a peripheral T cell pool of self-MH restricted, non-autoaggressive T cells. Post-thymic interaction of alpha-beta TR with the pMH complexes shapes TR structural and functional avidity (PubMed:15040585).</text>
</comment>
<comment type="subunit">
    <text evidence="5">Alpha-beta TR is a heterodimer composed of an alpha and beta chain; disulfide-linked. The alpha-beta TR is associated with the transmembrane signaling CD3 coreceptor proteins to form the TR-CD3 (TcR or TCR). The assembly of alpha-beta TR heterodimers with CD3 occurs in the endoplasmic reticulum where a single alpha-beta TR heterodimer associates with one CD3D-CD3E heterodimer, one CD3G-CD3E heterodimer and one CD247 homodimer forming a stable octameric structure. CD3D-CD3E and CD3G-CD3E heterodimers preferentially associate with TR alpha and TR beta chains, respectively. The association of the CD247 homodimer is the last step of TcR assembly in the endoplasmic reticulum and is required for transport to the cell surface.</text>
</comment>
<comment type="subcellular location">
    <subcellularLocation>
        <location evidence="5">Cell membrane</location>
    </subcellularLocation>
</comment>
<comment type="polymorphism">
    <text evidence="10">There are several alleles. The sequence shown is that of IMGT allele TRBV7-4*01.</text>
</comment>
<gene>
    <name evidence="9" type="primary">TRBV7-4</name>
</gene>
<proteinExistence type="inferred from homology"/>
<name>TVB74_HUMAN</name>
<reference key="1">
    <citation type="journal article" date="2003" name="Nature">
        <title>The DNA sequence of human chromosome 7.</title>
        <authorList>
            <person name="Hillier L.W."/>
            <person name="Fulton R.S."/>
            <person name="Fulton L.A."/>
            <person name="Graves T.A."/>
            <person name="Pepin K.H."/>
            <person name="Wagner-McPherson C."/>
            <person name="Layman D."/>
            <person name="Maas J."/>
            <person name="Jaeger S."/>
            <person name="Walker R."/>
            <person name="Wylie K."/>
            <person name="Sekhon M."/>
            <person name="Becker M.C."/>
            <person name="O'Laughlin M.D."/>
            <person name="Schaller M.E."/>
            <person name="Fewell G.A."/>
            <person name="Delehaunty K.D."/>
            <person name="Miner T.L."/>
            <person name="Nash W.E."/>
            <person name="Cordes M."/>
            <person name="Du H."/>
            <person name="Sun H."/>
            <person name="Edwards J."/>
            <person name="Bradshaw-Cordum H."/>
            <person name="Ali J."/>
            <person name="Andrews S."/>
            <person name="Isak A."/>
            <person name="Vanbrunt A."/>
            <person name="Nguyen C."/>
            <person name="Du F."/>
            <person name="Lamar B."/>
            <person name="Courtney L."/>
            <person name="Kalicki J."/>
            <person name="Ozersky P."/>
            <person name="Bielicki L."/>
            <person name="Scott K."/>
            <person name="Holmes A."/>
            <person name="Harkins R."/>
            <person name="Harris A."/>
            <person name="Strong C.M."/>
            <person name="Hou S."/>
            <person name="Tomlinson C."/>
            <person name="Dauphin-Kohlberg S."/>
            <person name="Kozlowicz-Reilly A."/>
            <person name="Leonard S."/>
            <person name="Rohlfing T."/>
            <person name="Rock S.M."/>
            <person name="Tin-Wollam A.-M."/>
            <person name="Abbott A."/>
            <person name="Minx P."/>
            <person name="Maupin R."/>
            <person name="Strowmatt C."/>
            <person name="Latreille P."/>
            <person name="Miller N."/>
            <person name="Johnson D."/>
            <person name="Murray J."/>
            <person name="Woessner J.P."/>
            <person name="Wendl M.C."/>
            <person name="Yang S.-P."/>
            <person name="Schultz B.R."/>
            <person name="Wallis J.W."/>
            <person name="Spieth J."/>
            <person name="Bieri T.A."/>
            <person name="Nelson J.O."/>
            <person name="Berkowicz N."/>
            <person name="Wohldmann P.E."/>
            <person name="Cook L.L."/>
            <person name="Hickenbotham M.T."/>
            <person name="Eldred J."/>
            <person name="Williams D."/>
            <person name="Bedell J.A."/>
            <person name="Mardis E.R."/>
            <person name="Clifton S.W."/>
            <person name="Chissoe S.L."/>
            <person name="Marra M.A."/>
            <person name="Raymond C."/>
            <person name="Haugen E."/>
            <person name="Gillett W."/>
            <person name="Zhou Y."/>
            <person name="James R."/>
            <person name="Phelps K."/>
            <person name="Iadanoto S."/>
            <person name="Bubb K."/>
            <person name="Simms E."/>
            <person name="Levy R."/>
            <person name="Clendenning J."/>
            <person name="Kaul R."/>
            <person name="Kent W.J."/>
            <person name="Furey T.S."/>
            <person name="Baertsch R.A."/>
            <person name="Brent M.R."/>
            <person name="Keibler E."/>
            <person name="Flicek P."/>
            <person name="Bork P."/>
            <person name="Suyama M."/>
            <person name="Bailey J.A."/>
            <person name="Portnoy M.E."/>
            <person name="Torrents D."/>
            <person name="Chinwalla A.T."/>
            <person name="Gish W.R."/>
            <person name="Eddy S.R."/>
            <person name="McPherson J.D."/>
            <person name="Olson M.V."/>
            <person name="Eichler E.E."/>
            <person name="Green E.D."/>
            <person name="Waterston R.H."/>
            <person name="Wilson R.K."/>
        </authorList>
    </citation>
    <scope>NUCLEOTIDE SEQUENCE [LARGE SCALE GENOMIC DNA] (IMGT ALLELE TRBV7-4*01)</scope>
</reference>
<reference key="2">
    <citation type="book" date="2001" name="The T Cell Receptor FactsBook.">
        <title>The T Cell Receptor FactsBook.</title>
        <editorList>
            <person name="Lefranc M.P."/>
            <person name="Lefranc G."/>
        </editorList>
        <authorList>
            <person name="Lefranc M.P."/>
            <person name="Lefranc G."/>
        </authorList>
    </citation>
    <scope>NOMENCLATURE</scope>
</reference>
<reference key="3">
    <citation type="journal article" date="2004" name="Nat. Rev. Immunol.">
        <title>The many important facets of T-cell repertoire diversity.</title>
        <authorList>
            <person name="Nikolich-Zugich J."/>
            <person name="Slifka M.K."/>
            <person name="Messaoudi I."/>
        </authorList>
    </citation>
    <scope>REVIEW ON T CELL REPERTOIRE DIVERSITY</scope>
</reference>
<reference key="4">
    <citation type="journal article" date="2010" name="Cold Spring Harb. Perspect. Biol.">
        <title>Structural biology of the T-cell receptor: insights into receptor assembly, ligand recognition, and initiation of signaling.</title>
        <authorList>
            <person name="Wucherpfennig K.W."/>
            <person name="Gagnon E."/>
            <person name="Call M.J."/>
            <person name="Huseby E.S."/>
            <person name="Call M.E."/>
        </authorList>
    </citation>
    <scope>REVIEW ON T CELL RECEPTOR-CD3 COMPLEX ASSEMBLY</scope>
    <scope>SUBCELLULAR LOCATION</scope>
</reference>
<reference key="5">
    <citation type="journal article" date="2013" name="Nat. Rev. Immunol.">
        <title>T cell receptor signalling networks: branched, diversified and bounded.</title>
        <authorList>
            <person name="Brownlie R.J."/>
            <person name="Zamoyska R."/>
        </authorList>
    </citation>
    <scope>REVIEW ON T CELL RECEPTOR SIGNALING</scope>
</reference>
<reference key="6">
    <citation type="journal article" date="2014" name="Front. Immunol.">
        <title>Immunoglobulin and T Cell Receptor Genes: IMGT((R)) and the Birth and Rise of Immunoinformatics.</title>
        <authorList>
            <person name="Lefranc M.P."/>
        </authorList>
    </citation>
    <scope>NOMENCLATURE</scope>
</reference>
<reference key="7">
    <citation type="journal article" date="2015" name="Annu. Rev. Immunol.">
        <title>T cell antigen receptor recognition of antigen-presenting molecules.</title>
        <authorList>
            <person name="Rossjohn J."/>
            <person name="Gras S."/>
            <person name="Miles J.J."/>
            <person name="Turner S.J."/>
            <person name="Godfrey D.I."/>
            <person name="McCluskey J."/>
        </authorList>
    </citation>
    <scope>REVIEW ON FUNCTION</scope>
</reference>
<feature type="signal peptide" evidence="1">
    <location>
        <begin position="1"/>
        <end position="21"/>
    </location>
</feature>
<feature type="chain" id="PRO_5008408770" description="T cell receptor beta variable 7-4" evidence="1">
    <location>
        <begin position="22"/>
        <end position="115"/>
    </location>
</feature>
<feature type="domain" description="Ig-like" evidence="2">
    <location>
        <begin position="22"/>
        <end position="115" status="greater than"/>
    </location>
</feature>
<feature type="region of interest" description="Disordered" evidence="3">
    <location>
        <begin position="67"/>
        <end position="97"/>
    </location>
</feature>
<feature type="disulfide bond" evidence="2">
    <location>
        <begin position="42"/>
        <end position="111"/>
    </location>
</feature>
<feature type="non-terminal residue">
    <location>
        <position position="115"/>
    </location>
</feature>
<sequence>MGTRLLCWVVLGFLGTDHTGAGVSQSPRYKVAKRGRDVALRCDSISGHVTLYWYRQTLGQGSEVLTYSQSDAQRDKSGRPSGRFSAERPERSVSTLKIQRTEQGDSAVYLCASSL</sequence>
<accession>A0A1B0GX95</accession>
<keyword id="KW-1064">Adaptive immunity</keyword>
<keyword id="KW-1003">Cell membrane</keyword>
<keyword id="KW-1015">Disulfide bond</keyword>
<keyword id="KW-0391">Immunity</keyword>
<keyword id="KW-0393">Immunoglobulin domain</keyword>
<keyword id="KW-0472">Membrane</keyword>
<keyword id="KW-0675">Receptor</keyword>
<keyword id="KW-1185">Reference proteome</keyword>
<keyword id="KW-0732">Signal</keyword>
<keyword id="KW-1279">T cell receptor</keyword>
<dbReference type="EMBL" id="AC244196">
    <property type="status" value="NOT_ANNOTATED_CDS"/>
    <property type="molecule type" value="Genomic_DNA"/>
</dbReference>
<dbReference type="SMR" id="A0A1B0GX95"/>
<dbReference type="FunCoup" id="A0A1B0GX95">
    <property type="interactions" value="378"/>
</dbReference>
<dbReference type="IMGT_GENE-DB" id="TRBV7-4"/>
<dbReference type="GlyGen" id="A0A1B0GX95">
    <property type="glycosylation" value="2 sites, 1 O-linked glycan (2 sites)"/>
</dbReference>
<dbReference type="BioMuta" id="TRBV7-4"/>
<dbReference type="Ensembl" id="ENST00000390369.2">
    <property type="protein sequence ID" value="ENSP00000374892.2"/>
    <property type="gene ID" value="ENSG00000253409.1"/>
</dbReference>
<dbReference type="AGR" id="HGNC:12238"/>
<dbReference type="GeneCards" id="TRBV7-4"/>
<dbReference type="HGNC" id="HGNC:12238">
    <property type="gene designation" value="TRBV7-4"/>
</dbReference>
<dbReference type="HPA" id="ENSG00000253409">
    <property type="expression patterns" value="Group enriched (lymphoid tissue, pancreas)"/>
</dbReference>
<dbReference type="neXtProt" id="NX_A0A1B0GX95"/>
<dbReference type="VEuPathDB" id="HostDB:ENSG00000253409"/>
<dbReference type="GeneTree" id="ENSGT00940000154460"/>
<dbReference type="InParanoid" id="A0A1B0GX95"/>
<dbReference type="OMA" id="ERPEKTY"/>
<dbReference type="OrthoDB" id="9803478at2759"/>
<dbReference type="PAN-GO" id="A0A1B0GX95">
    <property type="GO annotations" value="2 GO annotations based on evolutionary models"/>
</dbReference>
<dbReference type="SignaLink" id="A0A1B0GX95"/>
<dbReference type="ChiTaRS" id="TRBV7-4">
    <property type="organism name" value="human"/>
</dbReference>
<dbReference type="Pharos" id="A0A1B0GX95">
    <property type="development level" value="Tdark"/>
</dbReference>
<dbReference type="PRO" id="PR:A0A1B0GX95"/>
<dbReference type="Proteomes" id="UP000005640">
    <property type="component" value="Chromosome 7"/>
</dbReference>
<dbReference type="Bgee" id="ENSG00000253409">
    <property type="expression patterns" value="Expressed in monocyte and 69 other cell types or tissues"/>
</dbReference>
<dbReference type="GO" id="GO:0005886">
    <property type="term" value="C:plasma membrane"/>
    <property type="evidence" value="ECO:0000318"/>
    <property type="project" value="GO_Central"/>
</dbReference>
<dbReference type="GO" id="GO:0042101">
    <property type="term" value="C:T cell receptor complex"/>
    <property type="evidence" value="ECO:0007669"/>
    <property type="project" value="UniProtKB-KW"/>
</dbReference>
<dbReference type="GO" id="GO:0002250">
    <property type="term" value="P:adaptive immune response"/>
    <property type="evidence" value="ECO:0007669"/>
    <property type="project" value="UniProtKB-KW"/>
</dbReference>
<dbReference type="GO" id="GO:0007166">
    <property type="term" value="P:cell surface receptor signaling pathway"/>
    <property type="evidence" value="ECO:0000318"/>
    <property type="project" value="GO_Central"/>
</dbReference>
<dbReference type="FunFam" id="2.60.40.10:FF:002491">
    <property type="entry name" value="T cell receptor beta variable 12-4"/>
    <property type="match status" value="1"/>
</dbReference>
<dbReference type="Gene3D" id="2.60.40.10">
    <property type="entry name" value="Immunoglobulins"/>
    <property type="match status" value="1"/>
</dbReference>
<dbReference type="InterPro" id="IPR007110">
    <property type="entry name" value="Ig-like_dom"/>
</dbReference>
<dbReference type="InterPro" id="IPR036179">
    <property type="entry name" value="Ig-like_dom_sf"/>
</dbReference>
<dbReference type="InterPro" id="IPR013783">
    <property type="entry name" value="Ig-like_fold"/>
</dbReference>
<dbReference type="InterPro" id="IPR013106">
    <property type="entry name" value="Ig_V-set"/>
</dbReference>
<dbReference type="InterPro" id="IPR050413">
    <property type="entry name" value="TCR_beta_variable"/>
</dbReference>
<dbReference type="PANTHER" id="PTHR23268:SF20">
    <property type="entry name" value="T CELL RECEPTOR BETA VARIABLE 7-4-RELATED"/>
    <property type="match status" value="1"/>
</dbReference>
<dbReference type="PANTHER" id="PTHR23268">
    <property type="entry name" value="T-CELL RECEPTOR BETA CHAIN"/>
    <property type="match status" value="1"/>
</dbReference>
<dbReference type="Pfam" id="PF07686">
    <property type="entry name" value="V-set"/>
    <property type="match status" value="1"/>
</dbReference>
<dbReference type="SMART" id="SM00406">
    <property type="entry name" value="IGv"/>
    <property type="match status" value="1"/>
</dbReference>
<dbReference type="SUPFAM" id="SSF48726">
    <property type="entry name" value="Immunoglobulin"/>
    <property type="match status" value="1"/>
</dbReference>
<dbReference type="PROSITE" id="PS50835">
    <property type="entry name" value="IG_LIKE"/>
    <property type="match status" value="1"/>
</dbReference>